<comment type="function">
    <text evidence="1">Quinone reductase that provides resistance to thiol-specific stress caused by electrophilic quinones.</text>
</comment>
<comment type="function">
    <text evidence="1">Also exhibits azoreductase activity. Catalyzes the reductive cleavage of the azo bond in aromatic azo compounds to the corresponding amines.</text>
</comment>
<comment type="catalytic activity">
    <reaction evidence="1">
        <text>2 a quinone + NADH + H(+) = 2 a 1,4-benzosemiquinone + NAD(+)</text>
        <dbReference type="Rhea" id="RHEA:65952"/>
        <dbReference type="ChEBI" id="CHEBI:15378"/>
        <dbReference type="ChEBI" id="CHEBI:57540"/>
        <dbReference type="ChEBI" id="CHEBI:57945"/>
        <dbReference type="ChEBI" id="CHEBI:132124"/>
        <dbReference type="ChEBI" id="CHEBI:134225"/>
    </reaction>
</comment>
<comment type="catalytic activity">
    <reaction evidence="1">
        <text>N,N-dimethyl-1,4-phenylenediamine + anthranilate + 2 NAD(+) = 2-(4-dimethylaminophenyl)diazenylbenzoate + 2 NADH + 2 H(+)</text>
        <dbReference type="Rhea" id="RHEA:55872"/>
        <dbReference type="ChEBI" id="CHEBI:15378"/>
        <dbReference type="ChEBI" id="CHEBI:15783"/>
        <dbReference type="ChEBI" id="CHEBI:16567"/>
        <dbReference type="ChEBI" id="CHEBI:57540"/>
        <dbReference type="ChEBI" id="CHEBI:57945"/>
        <dbReference type="ChEBI" id="CHEBI:71579"/>
        <dbReference type="EC" id="1.7.1.17"/>
    </reaction>
</comment>
<comment type="cofactor">
    <cofactor evidence="1">
        <name>FMN</name>
        <dbReference type="ChEBI" id="CHEBI:58210"/>
    </cofactor>
    <text evidence="1">Binds 1 FMN per subunit.</text>
</comment>
<comment type="subunit">
    <text evidence="1">Homodimer.</text>
</comment>
<comment type="similarity">
    <text evidence="1">Belongs to the azoreductase type 1 family.</text>
</comment>
<organism>
    <name type="scientific">Bradyrhizobium diazoefficiens (strain JCM 10833 / BCRC 13528 / IAM 13628 / NBRC 14792 / USDA 110)</name>
    <dbReference type="NCBI Taxonomy" id="224911"/>
    <lineage>
        <taxon>Bacteria</taxon>
        <taxon>Pseudomonadati</taxon>
        <taxon>Pseudomonadota</taxon>
        <taxon>Alphaproteobacteria</taxon>
        <taxon>Hyphomicrobiales</taxon>
        <taxon>Nitrobacteraceae</taxon>
        <taxon>Bradyrhizobium</taxon>
    </lineage>
</organism>
<protein>
    <recommendedName>
        <fullName evidence="1">FMN-dependent NADH:quinone oxidoreductase 1</fullName>
        <ecNumber evidence="1">1.6.5.-</ecNumber>
    </recommendedName>
    <alternativeName>
        <fullName evidence="1">Azo-dye reductase 1</fullName>
    </alternativeName>
    <alternativeName>
        <fullName evidence="1">FMN-dependent NADH-azo compound oxidoreductase 1</fullName>
    </alternativeName>
    <alternativeName>
        <fullName evidence="1">FMN-dependent NADH-azoreductase 1</fullName>
        <ecNumber evidence="1">1.7.1.17</ecNumber>
    </alternativeName>
</protein>
<dbReference type="EC" id="1.6.5.-" evidence="1"/>
<dbReference type="EC" id="1.7.1.17" evidence="1"/>
<dbReference type="EMBL" id="BA000040">
    <property type="protein sequence ID" value="BAC48633.1"/>
    <property type="molecule type" value="Genomic_DNA"/>
</dbReference>
<dbReference type="RefSeq" id="NP_770008.1">
    <property type="nucleotide sequence ID" value="NC_004463.1"/>
</dbReference>
<dbReference type="RefSeq" id="WP_011086152.1">
    <property type="nucleotide sequence ID" value="NC_004463.1"/>
</dbReference>
<dbReference type="SMR" id="Q89PW2"/>
<dbReference type="STRING" id="224911.AAV28_13870"/>
<dbReference type="EnsemblBacteria" id="BAC48633">
    <property type="protein sequence ID" value="BAC48633"/>
    <property type="gene ID" value="BAC48633"/>
</dbReference>
<dbReference type="GeneID" id="46490401"/>
<dbReference type="KEGG" id="bja:bll3368"/>
<dbReference type="PATRIC" id="fig|224911.44.peg.3017"/>
<dbReference type="eggNOG" id="COG1182">
    <property type="taxonomic scope" value="Bacteria"/>
</dbReference>
<dbReference type="HOGENOM" id="CLU_088964_1_0_5"/>
<dbReference type="InParanoid" id="Q89PW2"/>
<dbReference type="OrthoDB" id="9787136at2"/>
<dbReference type="PhylomeDB" id="Q89PW2"/>
<dbReference type="Proteomes" id="UP000002526">
    <property type="component" value="Chromosome"/>
</dbReference>
<dbReference type="GO" id="GO:0009055">
    <property type="term" value="F:electron transfer activity"/>
    <property type="evidence" value="ECO:0007669"/>
    <property type="project" value="UniProtKB-UniRule"/>
</dbReference>
<dbReference type="GO" id="GO:0010181">
    <property type="term" value="F:FMN binding"/>
    <property type="evidence" value="ECO:0007669"/>
    <property type="project" value="UniProtKB-UniRule"/>
</dbReference>
<dbReference type="GO" id="GO:0016652">
    <property type="term" value="F:oxidoreductase activity, acting on NAD(P)H as acceptor"/>
    <property type="evidence" value="ECO:0007669"/>
    <property type="project" value="UniProtKB-UniRule"/>
</dbReference>
<dbReference type="GO" id="GO:0016655">
    <property type="term" value="F:oxidoreductase activity, acting on NAD(P)H, quinone or similar compound as acceptor"/>
    <property type="evidence" value="ECO:0007669"/>
    <property type="project" value="InterPro"/>
</dbReference>
<dbReference type="Gene3D" id="3.40.50.360">
    <property type="match status" value="1"/>
</dbReference>
<dbReference type="HAMAP" id="MF_01216">
    <property type="entry name" value="Azoreductase_type1"/>
    <property type="match status" value="1"/>
</dbReference>
<dbReference type="InterPro" id="IPR003680">
    <property type="entry name" value="Flavodoxin_fold"/>
</dbReference>
<dbReference type="InterPro" id="IPR029039">
    <property type="entry name" value="Flavoprotein-like_sf"/>
</dbReference>
<dbReference type="InterPro" id="IPR050104">
    <property type="entry name" value="FMN-dep_NADH:Q_OxRdtase_AzoR1"/>
</dbReference>
<dbReference type="InterPro" id="IPR023048">
    <property type="entry name" value="NADH:quinone_OxRdtase_FMN_depd"/>
</dbReference>
<dbReference type="PANTHER" id="PTHR43741">
    <property type="entry name" value="FMN-DEPENDENT NADH-AZOREDUCTASE 1"/>
    <property type="match status" value="1"/>
</dbReference>
<dbReference type="PANTHER" id="PTHR43741:SF4">
    <property type="entry name" value="FMN-DEPENDENT NADH:QUINONE OXIDOREDUCTASE"/>
    <property type="match status" value="1"/>
</dbReference>
<dbReference type="Pfam" id="PF02525">
    <property type="entry name" value="Flavodoxin_2"/>
    <property type="match status" value="1"/>
</dbReference>
<dbReference type="SUPFAM" id="SSF52218">
    <property type="entry name" value="Flavoproteins"/>
    <property type="match status" value="1"/>
</dbReference>
<evidence type="ECO:0000255" key="1">
    <source>
        <dbReference type="HAMAP-Rule" id="MF_01216"/>
    </source>
</evidence>
<feature type="chain" id="PRO_0000245897" description="FMN-dependent NADH:quinone oxidoreductase 1">
    <location>
        <begin position="1"/>
        <end position="208"/>
    </location>
</feature>
<feature type="binding site" evidence="1">
    <location>
        <position position="10"/>
    </location>
    <ligand>
        <name>FMN</name>
        <dbReference type="ChEBI" id="CHEBI:58210"/>
    </ligand>
</feature>
<feature type="binding site" evidence="1">
    <location>
        <begin position="15"/>
        <end position="17"/>
    </location>
    <ligand>
        <name>FMN</name>
        <dbReference type="ChEBI" id="CHEBI:58210"/>
    </ligand>
</feature>
<feature type="binding site" evidence="1">
    <location>
        <begin position="97"/>
        <end position="100"/>
    </location>
    <ligand>
        <name>FMN</name>
        <dbReference type="ChEBI" id="CHEBI:58210"/>
    </ligand>
</feature>
<sequence length="208" mass="23682">MAKLLHLSCSPRPDSESSAGARVFLDGFRQMRPDWDIDVMDLWRERMPEFAGPIVEAKYARMKAEAFDDAQRDSFAEAERMATRLSLAERVLISTPMWNFGIPYKLKQWFDIIVQPGLTFRYDPASGYLPLLKDRPTLVILASGSDFVTGMNRGRTDMATPYLREALRFIGISDVRFVPIGPTTGPADPILAARETAYRRLREIATWF</sequence>
<proteinExistence type="inferred from homology"/>
<gene>
    <name evidence="1" type="primary">azoR1</name>
    <name type="ordered locus">bll3368</name>
</gene>
<reference key="1">
    <citation type="journal article" date="2002" name="DNA Res.">
        <title>Complete genomic sequence of nitrogen-fixing symbiotic bacterium Bradyrhizobium japonicum USDA110.</title>
        <authorList>
            <person name="Kaneko T."/>
            <person name="Nakamura Y."/>
            <person name="Sato S."/>
            <person name="Minamisawa K."/>
            <person name="Uchiumi T."/>
            <person name="Sasamoto S."/>
            <person name="Watanabe A."/>
            <person name="Idesawa K."/>
            <person name="Iriguchi M."/>
            <person name="Kawashima K."/>
            <person name="Kohara M."/>
            <person name="Matsumoto M."/>
            <person name="Shimpo S."/>
            <person name="Tsuruoka H."/>
            <person name="Wada T."/>
            <person name="Yamada M."/>
            <person name="Tabata S."/>
        </authorList>
    </citation>
    <scope>NUCLEOTIDE SEQUENCE [LARGE SCALE GENOMIC DNA]</scope>
    <source>
        <strain>JCM 10833 / BCRC 13528 / IAM 13628 / NBRC 14792 / USDA 110</strain>
    </source>
</reference>
<keyword id="KW-0285">Flavoprotein</keyword>
<keyword id="KW-0288">FMN</keyword>
<keyword id="KW-0520">NAD</keyword>
<keyword id="KW-0560">Oxidoreductase</keyword>
<keyword id="KW-1185">Reference proteome</keyword>
<name>AZOR1_BRADU</name>
<accession>Q89PW2</accession>